<feature type="chain" id="PRO_0000382417" description="Glutamate-1-semialdehyde 2,1-aminomutase">
    <location>
        <begin position="1"/>
        <end position="426"/>
    </location>
</feature>
<feature type="modified residue" description="N6-(pyridoxal phosphate)lysine" evidence="1">
    <location>
        <position position="268"/>
    </location>
</feature>
<evidence type="ECO:0000255" key="1">
    <source>
        <dbReference type="HAMAP-Rule" id="MF_00375"/>
    </source>
</evidence>
<reference key="1">
    <citation type="journal article" date="2009" name="Proc. Natl. Acad. Sci. U.S.A.">
        <title>Biogeography of the Sulfolobus islandicus pan-genome.</title>
        <authorList>
            <person name="Reno M.L."/>
            <person name="Held N.L."/>
            <person name="Fields C.J."/>
            <person name="Burke P.V."/>
            <person name="Whitaker R.J."/>
        </authorList>
    </citation>
    <scope>NUCLEOTIDE SEQUENCE [LARGE SCALE GENOMIC DNA]</scope>
    <source>
        <strain>Y.G.57.14 / Yellowstone #1</strain>
    </source>
</reference>
<sequence length="426" mass="47261">MDKGRCTILNSEELWAQARQLFAGGVNSPVRAAVKPFPFYVERGKGAYIYTVEGNKFIDYVLGYGPLILGHSPESVKRKIIEQLEKGWLFGTPSKLEIELAKKISSHIPSAQKIRFVNSGTEATMAAIRLARGYSKRSKILKFSGNYHGAHDYTLVEAGSAATEYNVTTSDGIPMEIMKTVEICEFNDLDCVDKKLRNEDIAAALLEPIMGNAGVILPEKGFLSGLRELTKSYNSLLIFDEVITGFRIDIGGAQSYYQIYPDITTLGKIIGGGFPIGAVAGKAEIIDNFTPAGRVFNAGTFNANPISMIAGIATIEELEKEYPYNIANKASKTLVEELERLLKIKHTINHIGSMFQVFFGIDKVRNYSDAKRANKEYYIKFHERLLKERVFIPPSQYETIFTSAAHEDDVVNDTIDKLAKVIGELS</sequence>
<comment type="catalytic activity">
    <reaction evidence="1">
        <text>(S)-4-amino-5-oxopentanoate = 5-aminolevulinate</text>
        <dbReference type="Rhea" id="RHEA:14265"/>
        <dbReference type="ChEBI" id="CHEBI:57501"/>
        <dbReference type="ChEBI" id="CHEBI:356416"/>
        <dbReference type="EC" id="5.4.3.8"/>
    </reaction>
</comment>
<comment type="cofactor">
    <cofactor evidence="1">
        <name>pyridoxal 5'-phosphate</name>
        <dbReference type="ChEBI" id="CHEBI:597326"/>
    </cofactor>
</comment>
<comment type="pathway">
    <text evidence="1">Porphyrin-containing compound metabolism; protoporphyrin-IX biosynthesis; 5-aminolevulinate from L-glutamyl-tRNA(Glu): step 2/2.</text>
</comment>
<comment type="subcellular location">
    <subcellularLocation>
        <location evidence="1">Cytoplasm</location>
    </subcellularLocation>
</comment>
<comment type="similarity">
    <text evidence="1">Belongs to the class-III pyridoxal-phosphate-dependent aminotransferase family. HemL subfamily.</text>
</comment>
<gene>
    <name evidence="1" type="primary">hemL</name>
    <name type="ordered locus">YG5714_2075</name>
</gene>
<accession>C3N842</accession>
<organism>
    <name type="scientific">Saccharolobus islandicus (strain Y.G.57.14 / Yellowstone #1)</name>
    <name type="common">Sulfolobus islandicus</name>
    <dbReference type="NCBI Taxonomy" id="439386"/>
    <lineage>
        <taxon>Archaea</taxon>
        <taxon>Thermoproteota</taxon>
        <taxon>Thermoprotei</taxon>
        <taxon>Sulfolobales</taxon>
        <taxon>Sulfolobaceae</taxon>
        <taxon>Saccharolobus</taxon>
    </lineage>
</organism>
<keyword id="KW-0963">Cytoplasm</keyword>
<keyword id="KW-0413">Isomerase</keyword>
<keyword id="KW-0627">Porphyrin biosynthesis</keyword>
<keyword id="KW-0663">Pyridoxal phosphate</keyword>
<dbReference type="EC" id="5.4.3.8" evidence="1"/>
<dbReference type="EMBL" id="CP001403">
    <property type="protein sequence ID" value="ACP46329.1"/>
    <property type="molecule type" value="Genomic_DNA"/>
</dbReference>
<dbReference type="RefSeq" id="WP_012714102.1">
    <property type="nucleotide sequence ID" value="NC_012622.1"/>
</dbReference>
<dbReference type="SMR" id="C3N842"/>
<dbReference type="GeneID" id="84062267"/>
<dbReference type="KEGG" id="siy:YG5714_2075"/>
<dbReference type="HOGENOM" id="CLU_016922_1_5_2"/>
<dbReference type="UniPathway" id="UPA00251">
    <property type="reaction ID" value="UER00317"/>
</dbReference>
<dbReference type="Proteomes" id="UP000002308">
    <property type="component" value="Chromosome"/>
</dbReference>
<dbReference type="GO" id="GO:0005737">
    <property type="term" value="C:cytoplasm"/>
    <property type="evidence" value="ECO:0007669"/>
    <property type="project" value="UniProtKB-SubCell"/>
</dbReference>
<dbReference type="GO" id="GO:0042286">
    <property type="term" value="F:glutamate-1-semialdehyde 2,1-aminomutase activity"/>
    <property type="evidence" value="ECO:0007669"/>
    <property type="project" value="UniProtKB-UniRule"/>
</dbReference>
<dbReference type="GO" id="GO:0030170">
    <property type="term" value="F:pyridoxal phosphate binding"/>
    <property type="evidence" value="ECO:0007669"/>
    <property type="project" value="InterPro"/>
</dbReference>
<dbReference type="GO" id="GO:0008483">
    <property type="term" value="F:transaminase activity"/>
    <property type="evidence" value="ECO:0007669"/>
    <property type="project" value="InterPro"/>
</dbReference>
<dbReference type="GO" id="GO:0006782">
    <property type="term" value="P:protoporphyrinogen IX biosynthetic process"/>
    <property type="evidence" value="ECO:0007669"/>
    <property type="project" value="UniProtKB-UniRule"/>
</dbReference>
<dbReference type="CDD" id="cd00610">
    <property type="entry name" value="OAT_like"/>
    <property type="match status" value="1"/>
</dbReference>
<dbReference type="FunFam" id="3.40.640.10:FF:000021">
    <property type="entry name" value="Glutamate-1-semialdehyde 2,1-aminomutase"/>
    <property type="match status" value="1"/>
</dbReference>
<dbReference type="Gene3D" id="3.90.1150.10">
    <property type="entry name" value="Aspartate Aminotransferase, domain 1"/>
    <property type="match status" value="1"/>
</dbReference>
<dbReference type="Gene3D" id="3.40.640.10">
    <property type="entry name" value="Type I PLP-dependent aspartate aminotransferase-like (Major domain)"/>
    <property type="match status" value="1"/>
</dbReference>
<dbReference type="HAMAP" id="MF_00375">
    <property type="entry name" value="HemL_aminotrans_3"/>
    <property type="match status" value="1"/>
</dbReference>
<dbReference type="InterPro" id="IPR004639">
    <property type="entry name" value="4pyrrol_synth_GluAld_NH2Trfase"/>
</dbReference>
<dbReference type="InterPro" id="IPR005814">
    <property type="entry name" value="Aminotrans_3"/>
</dbReference>
<dbReference type="InterPro" id="IPR049704">
    <property type="entry name" value="Aminotrans_3_PPA_site"/>
</dbReference>
<dbReference type="InterPro" id="IPR015424">
    <property type="entry name" value="PyrdxlP-dep_Trfase"/>
</dbReference>
<dbReference type="InterPro" id="IPR015421">
    <property type="entry name" value="PyrdxlP-dep_Trfase_major"/>
</dbReference>
<dbReference type="InterPro" id="IPR015422">
    <property type="entry name" value="PyrdxlP-dep_Trfase_small"/>
</dbReference>
<dbReference type="NCBIfam" id="TIGR00713">
    <property type="entry name" value="hemL"/>
    <property type="match status" value="1"/>
</dbReference>
<dbReference type="NCBIfam" id="NF000818">
    <property type="entry name" value="PRK00062.1"/>
    <property type="match status" value="1"/>
</dbReference>
<dbReference type="PANTHER" id="PTHR43713">
    <property type="entry name" value="GLUTAMATE-1-SEMIALDEHYDE 2,1-AMINOMUTASE"/>
    <property type="match status" value="1"/>
</dbReference>
<dbReference type="PANTHER" id="PTHR43713:SF3">
    <property type="entry name" value="GLUTAMATE-1-SEMIALDEHYDE 2,1-AMINOMUTASE 1, CHLOROPLASTIC-RELATED"/>
    <property type="match status" value="1"/>
</dbReference>
<dbReference type="Pfam" id="PF00202">
    <property type="entry name" value="Aminotran_3"/>
    <property type="match status" value="1"/>
</dbReference>
<dbReference type="SUPFAM" id="SSF53383">
    <property type="entry name" value="PLP-dependent transferases"/>
    <property type="match status" value="1"/>
</dbReference>
<dbReference type="PROSITE" id="PS00600">
    <property type="entry name" value="AA_TRANSFER_CLASS_3"/>
    <property type="match status" value="1"/>
</dbReference>
<protein>
    <recommendedName>
        <fullName evidence="1">Glutamate-1-semialdehyde 2,1-aminomutase</fullName>
        <shortName evidence="1">GSA</shortName>
        <ecNumber evidence="1">5.4.3.8</ecNumber>
    </recommendedName>
    <alternativeName>
        <fullName evidence="1">Glutamate-1-semialdehyde aminotransferase</fullName>
        <shortName evidence="1">GSA-AT</shortName>
    </alternativeName>
</protein>
<proteinExistence type="inferred from homology"/>
<name>GSA_SACI7</name>